<keyword id="KW-0456">Lyase</keyword>
<keyword id="KW-0472">Membrane</keyword>
<keyword id="KW-0479">Metal-binding</keyword>
<keyword id="KW-0496">Mitochondrion</keyword>
<keyword id="KW-0999">Mitochondrion inner membrane</keyword>
<keyword id="KW-1185">Reference proteome</keyword>
<keyword id="KW-0831">Ubiquinone biosynthesis</keyword>
<keyword id="KW-0862">Zinc</keyword>
<name>COQ4_PLAVS</name>
<evidence type="ECO:0000255" key="1">
    <source>
        <dbReference type="HAMAP-Rule" id="MF_03111"/>
    </source>
</evidence>
<protein>
    <recommendedName>
        <fullName evidence="1">Ubiquinone biosynthesis protein COQ4 homolog, mitochondrial</fullName>
    </recommendedName>
    <alternativeName>
        <fullName>4-hydroxy-3-methoxy-5-polyprenylbenzoate decarboxylase</fullName>
        <ecNumber evidence="1">4.1.1.130</ecNumber>
    </alternativeName>
    <alternativeName>
        <fullName evidence="1">Coenzyme Q biosynthesis protein 4 homolog</fullName>
    </alternativeName>
</protein>
<reference key="1">
    <citation type="journal article" date="2008" name="Nature">
        <title>Comparative genomics of the neglected human malaria parasite Plasmodium vivax.</title>
        <authorList>
            <person name="Carlton J.M."/>
            <person name="Adams J.H."/>
            <person name="Silva J.C."/>
            <person name="Bidwell S.L."/>
            <person name="Lorenzi H."/>
            <person name="Caler E."/>
            <person name="Crabtree J."/>
            <person name="Angiuoli S.V."/>
            <person name="Merino E.F."/>
            <person name="Amedeo P."/>
            <person name="Cheng Q."/>
            <person name="Coulson R.M.R."/>
            <person name="Crabb B.S."/>
            <person name="del Portillo H.A."/>
            <person name="Essien K."/>
            <person name="Feldblyum T.V."/>
            <person name="Fernandez-Becerra C."/>
            <person name="Gilson P.R."/>
            <person name="Gueye A.H."/>
            <person name="Guo X."/>
            <person name="Kang'a S."/>
            <person name="Kooij T.W.A."/>
            <person name="Korsinczky M."/>
            <person name="Meyer E.V.-S."/>
            <person name="Nene V."/>
            <person name="Paulsen I."/>
            <person name="White O."/>
            <person name="Ralph S.A."/>
            <person name="Ren Q."/>
            <person name="Sargeant T.J."/>
            <person name="Salzberg S.L."/>
            <person name="Stoeckert C.J."/>
            <person name="Sullivan S.A."/>
            <person name="Yamamoto M.M."/>
            <person name="Hoffman S.L."/>
            <person name="Wortman J.R."/>
            <person name="Gardner M.J."/>
            <person name="Galinski M.R."/>
            <person name="Barnwell J.W."/>
            <person name="Fraser-Liggett C.M."/>
        </authorList>
    </citation>
    <scope>NUCLEOTIDE SEQUENCE [LARGE SCALE GENOMIC DNA]</scope>
    <source>
        <strain>Salvador I</strain>
    </source>
</reference>
<organism>
    <name type="scientific">Plasmodium vivax (strain Salvador I)</name>
    <dbReference type="NCBI Taxonomy" id="126793"/>
    <lineage>
        <taxon>Eukaryota</taxon>
        <taxon>Sar</taxon>
        <taxon>Alveolata</taxon>
        <taxon>Apicomplexa</taxon>
        <taxon>Aconoidasida</taxon>
        <taxon>Haemosporida</taxon>
        <taxon>Plasmodiidae</taxon>
        <taxon>Plasmodium</taxon>
        <taxon>Plasmodium (Plasmodium)</taxon>
    </lineage>
</organism>
<feature type="chain" id="PRO_0000388081" description="Ubiquinone biosynthesis protein COQ4 homolog, mitochondrial">
    <location>
        <begin position="1"/>
        <end position="355"/>
    </location>
</feature>
<feature type="binding site" evidence="1">
    <location>
        <position position="134"/>
    </location>
    <ligand>
        <name>Zn(2+)</name>
        <dbReference type="ChEBI" id="CHEBI:29105"/>
    </ligand>
</feature>
<feature type="binding site" evidence="1">
    <location>
        <position position="135"/>
    </location>
    <ligand>
        <name>Zn(2+)</name>
        <dbReference type="ChEBI" id="CHEBI:29105"/>
    </ligand>
</feature>
<feature type="binding site" evidence="1">
    <location>
        <position position="138"/>
    </location>
    <ligand>
        <name>Zn(2+)</name>
        <dbReference type="ChEBI" id="CHEBI:29105"/>
    </ligand>
</feature>
<feature type="binding site" evidence="1">
    <location>
        <position position="150"/>
    </location>
    <ligand>
        <name>Zn(2+)</name>
        <dbReference type="ChEBI" id="CHEBI:29105"/>
    </ligand>
</feature>
<comment type="function">
    <text evidence="1">Lyase that catalyzes the C1-decarboxylation of 4-hydroxy-3-methoxy-5-(all-trans-polyprenyl)benzoic acid into 2-methoxy-6-(all-trans-polyprenyl)phenol during ubiquinone biosynthesis.</text>
</comment>
<comment type="catalytic activity">
    <reaction evidence="1">
        <text>a 4-hydroxy-3-methoxy-5-(all-trans-polyprenyl)benzoate + H(+) = a 2-methoxy-6-(all-trans-polyprenyl)phenol + CO2</text>
        <dbReference type="Rhea" id="RHEA:81179"/>
        <dbReference type="Rhea" id="RHEA-COMP:9551"/>
        <dbReference type="Rhea" id="RHEA-COMP:10931"/>
        <dbReference type="ChEBI" id="CHEBI:15378"/>
        <dbReference type="ChEBI" id="CHEBI:16526"/>
        <dbReference type="ChEBI" id="CHEBI:62731"/>
        <dbReference type="ChEBI" id="CHEBI:84443"/>
        <dbReference type="EC" id="4.1.1.130"/>
    </reaction>
</comment>
<comment type="cofactor">
    <cofactor evidence="1">
        <name>Zn(2+)</name>
        <dbReference type="ChEBI" id="CHEBI:29105"/>
    </cofactor>
</comment>
<comment type="pathway">
    <text evidence="1">Cofactor biosynthesis; ubiquinone biosynthesis.</text>
</comment>
<comment type="subunit">
    <text evidence="1">Component of a multi-subunit COQ enzyme complex.</text>
</comment>
<comment type="subcellular location">
    <subcellularLocation>
        <location evidence="1">Mitochondrion inner membrane</location>
        <topology evidence="1">Peripheral membrane protein</topology>
        <orientation evidence="1">Matrix side</orientation>
    </subcellularLocation>
</comment>
<comment type="miscellaneous">
    <text evidence="1">This protein may be expected to contain an N-terminal transit peptide but none has been predicted.</text>
</comment>
<comment type="similarity">
    <text evidence="1">Belongs to the COQ4 family.</text>
</comment>
<accession>A5K4D8</accession>
<proteinExistence type="inferred from homology"/>
<sequence length="355" mass="42461">MHNFAKIFRSNFIDINAANKFEIFLKTILRIYKTPARTHLLAHAADISAIYAVRQIYNYMKNDEEGRTVLKEKPLLIRQDIQFNELKKLPKNTLGYKYMKFLETYKLHAHDREVSHFFTDLNYSYILTRYRQIHDIGHVVYNLNISIESEAALKLIELVQTKLPITLLAILVAPFMTPIYRFQYIFKDSLPSNFLSPNFDFTYTDAYNYVDELSIKQYEYNLTDYFHVEKRNDRNFYTKMYQHYFDNINNSSAVRGSIIYGFENKSSNDIIYDQPNREYIFLKNLKKKYLLFQYKPRKNLLRELYPWAYMAGVSTTKPLHSIHIEKWLDKDIDLFRRTYNISPLPDHLNLMAGIN</sequence>
<dbReference type="EC" id="4.1.1.130" evidence="1"/>
<dbReference type="EMBL" id="AAKM01000005">
    <property type="protein sequence ID" value="EDL45516.1"/>
    <property type="molecule type" value="Genomic_DNA"/>
</dbReference>
<dbReference type="RefSeq" id="XP_001615243.1">
    <property type="nucleotide sequence ID" value="XM_001615193.1"/>
</dbReference>
<dbReference type="STRING" id="126793.A5K4D8"/>
<dbReference type="EnsemblProtists" id="EDL45516">
    <property type="protein sequence ID" value="EDL45516"/>
    <property type="gene ID" value="PVX_091260"/>
</dbReference>
<dbReference type="GeneID" id="5474539"/>
<dbReference type="KEGG" id="pvx:PVX_091260"/>
<dbReference type="VEuPathDB" id="PlasmoDB:PVX_091260"/>
<dbReference type="InParanoid" id="A5K4D8"/>
<dbReference type="OMA" id="QIHDIGH"/>
<dbReference type="PhylomeDB" id="A5K4D8"/>
<dbReference type="UniPathway" id="UPA00232"/>
<dbReference type="Proteomes" id="UP000008333">
    <property type="component" value="Chromosome 9"/>
</dbReference>
<dbReference type="GO" id="GO:0031314">
    <property type="term" value="C:extrinsic component of mitochondrial inner membrane"/>
    <property type="evidence" value="ECO:0007669"/>
    <property type="project" value="UniProtKB-UniRule"/>
</dbReference>
<dbReference type="GO" id="GO:0006744">
    <property type="term" value="P:ubiquinone biosynthetic process"/>
    <property type="evidence" value="ECO:0007669"/>
    <property type="project" value="UniProtKB-UniRule"/>
</dbReference>
<dbReference type="HAMAP" id="MF_03111">
    <property type="entry name" value="Coq4"/>
    <property type="match status" value="1"/>
</dbReference>
<dbReference type="InterPro" id="IPR007715">
    <property type="entry name" value="Coq4"/>
</dbReference>
<dbReference type="InterPro" id="IPR027540">
    <property type="entry name" value="Coq4_euk"/>
</dbReference>
<dbReference type="PANTHER" id="PTHR12922">
    <property type="entry name" value="UBIQUINONE BIOSYNTHESIS PROTEIN"/>
    <property type="match status" value="1"/>
</dbReference>
<dbReference type="PANTHER" id="PTHR12922:SF7">
    <property type="entry name" value="UBIQUINONE BIOSYNTHESIS PROTEIN COQ4 HOMOLOG, MITOCHONDRIAL"/>
    <property type="match status" value="1"/>
</dbReference>
<dbReference type="Pfam" id="PF05019">
    <property type="entry name" value="Coq4"/>
    <property type="match status" value="1"/>
</dbReference>
<gene>
    <name type="ORF">PVX_091260</name>
</gene>